<reference key="1">
    <citation type="journal article" date="1987" name="Dokl. Biochem.">
        <title>Cloning and primary structure of Shigella toxin genes.</title>
        <authorList>
            <person name="Kozlov Y.V."/>
            <person name="Kabishev A.A."/>
            <person name="Fedchenko V.I."/>
            <person name="Bayev A.A."/>
        </authorList>
    </citation>
    <scope>NUCLEOTIDE SEQUENCE [GENOMIC DNA]</scope>
</reference>
<reference key="2">
    <citation type="journal article" date="1988" name="J. Bacteriol.">
        <title>Cloning and sequencing of the genes for Shiga toxin from Shigella dysenteriae type 1.</title>
        <authorList>
            <person name="Strockbine N.A."/>
            <person name="Jackson M.P."/>
            <person name="Sung L.M."/>
            <person name="Holmes R.K."/>
            <person name="O'Brien A.D."/>
        </authorList>
    </citation>
    <scope>NUCLEOTIDE SEQUENCE [GENOMIC DNA]</scope>
</reference>
<reference key="3">
    <citation type="journal article" date="1988" name="Gene">
        <title>The primary structure of the operons coding for Shigella dysenteriae toxin and temperature phage H30 shiga-like toxin.</title>
        <authorList>
            <person name="Kozlov Y.V."/>
            <person name="Kabishev A.A."/>
            <person name="Lukyanov E.V."/>
            <person name="Bayev A.A."/>
        </authorList>
    </citation>
    <scope>NUCLEOTIDE SEQUENCE [GENOMIC DNA]</scope>
</reference>
<reference key="4">
    <citation type="journal article" date="2000" name="Infect. Immun.">
        <title>Structural analysis of phage-borne stx genes and their flanking sequences in shiga toxin-producing Escherichia coli and Shigella dysenteriae type 1 strains.</title>
        <authorList>
            <person name="Unkmeir A."/>
            <person name="Schmidt H."/>
        </authorList>
    </citation>
    <scope>NUCLEOTIDE SEQUENCE [GENOMIC DNA]</scope>
    <source>
        <strain>H2765-39/81 / Type 1</strain>
    </source>
</reference>
<reference key="5">
    <citation type="journal article" date="1988" name="Eur. J. Biochem.">
        <title>Site of action of a Vero toxin (VT2) from Escherichia coli O157:H7 and of Shiga toxin on eukaryotic ribosomes. RNA N-glycosidase activity of the toxins.</title>
        <authorList>
            <person name="Endo Y."/>
            <person name="Tsurugi K."/>
            <person name="Yutsudo T."/>
            <person name="Takeda Y."/>
            <person name="Ogasawara T."/>
            <person name="Igarashi K."/>
        </authorList>
    </citation>
    <scope>EFFECT ON EUKARYOTIC RIBOSOME</scope>
</reference>
<reference key="6">
    <citation type="journal article" date="1995" name="J. Biol. Chem.">
        <title>Furin-induced cleavage and activation of Shiga toxin.</title>
        <authorList>
            <person name="Garred O."/>
            <person name="van Deurs B."/>
            <person name="Sandvig K."/>
        </authorList>
    </citation>
    <scope>CLEAVAGE BY FURIN</scope>
</reference>
<reference key="7">
    <citation type="journal article" date="1995" name="J. Bacteriol.">
        <title>Analysis of Shiga toxin subunit association by using hybrid A polypeptides and site-specific mutagenesis.</title>
        <authorList>
            <person name="Jemal C."/>
            <person name="Haddad J.E."/>
            <person name="Begum D."/>
            <person name="Jackson M.P."/>
        </authorList>
    </citation>
    <scope>MUTAGENESIS OF TRP-299; ASP-300; ARG-310 AND ARG-311</scope>
</reference>
<reference key="8">
    <citation type="journal article" date="1998" name="Infect. Immun.">
        <title>Disruption of an internal membrane-spanning region in Shiga toxin 1 reduces cytotoxicity.</title>
        <authorList>
            <person name="Suhan M.L."/>
            <person name="Hovde C.J."/>
        </authorList>
    </citation>
    <scope>MUTAGENESIS OF PHE-248; ALA-253; ILE-254; LEU-255 AND GLY-256</scope>
</reference>
<reference key="9">
    <citation type="journal article" date="1993" name="J. Mol. Biol.">
        <title>Purification and crystallization of Shiga toxin from Shigella dysenteriae.</title>
        <authorList>
            <person name="Kozlov Y.V."/>
            <person name="Chernaia M.M."/>
            <person name="Fraser M.E."/>
            <person name="James M.N.G."/>
        </authorList>
    </citation>
    <scope>CRYSTALLIZATION</scope>
</reference>
<reference key="10">
    <citation type="journal article" date="1994" name="Nat. Struct. Biol.">
        <title>Crystal structure of the holotoxin from Shigella dysenteriae at 2.5 A resolution.</title>
        <authorList>
            <person name="Fraser M.E."/>
            <person name="Chernaia M.M."/>
            <person name="Kozlov Y.V."/>
            <person name="James M.N.G."/>
        </authorList>
    </citation>
    <scope>X-RAY CRYSTALLOGRAPHY (2.5 ANGSTROMS) OF 23-315</scope>
</reference>
<reference key="11">
    <citation type="journal article" date="2004" name="J. Biol. Chem.">
        <title>Structure of shiga toxin type 2 (Stx2) from Escherichia coli O157:H7.</title>
        <authorList>
            <person name="Fraser M.E."/>
            <person name="Fujinaga M."/>
            <person name="Cherney M.M."/>
            <person name="Melton-Celsa A.R."/>
            <person name="Twiddy E.M."/>
            <person name="O'Brien A.D."/>
            <person name="James M.N.G."/>
        </authorList>
    </citation>
    <scope>X-RAY CRYSTALLOGRAPHY (2.5 ANGSTROMS) OF 23-315</scope>
</reference>
<gene>
    <name type="primary">stxA</name>
</gene>
<protein>
    <recommendedName>
        <fullName>Shiga toxin subunit A</fullName>
        <ecNumber>3.2.2.22</ecNumber>
    </recommendedName>
</protein>
<feature type="signal peptide" evidence="2">
    <location>
        <begin position="1"/>
        <end position="22"/>
    </location>
</feature>
<feature type="chain" id="PRO_0000312302" description="Shiga toxin subunit A">
    <location>
        <begin position="23"/>
        <end position="315"/>
    </location>
</feature>
<feature type="region of interest" description="A1">
    <location>
        <begin position="23"/>
        <end position="273"/>
    </location>
</feature>
<feature type="region of interest" description="A2">
    <location>
        <begin position="274"/>
        <end position="315"/>
    </location>
</feature>
<feature type="active site">
    <location>
        <position position="189"/>
    </location>
</feature>
<feature type="site" description="Cleavage; by furin">
    <location>
        <begin position="273"/>
        <end position="274"/>
    </location>
</feature>
<feature type="disulfide bond" evidence="1">
    <location>
        <begin position="264"/>
        <end position="283"/>
    </location>
</feature>
<feature type="mutagenesis site" description="No effect on enzymatic activity; 10-fold decrease in cytotoxicity." evidence="4">
    <original>F</original>
    <variation>Y</variation>
    <location>
        <position position="248"/>
    </location>
</feature>
<feature type="mutagenesis site" description="225-fold decrease in cytotoxicity, probably due to reduced translocation across the ER membrane; when associated with E-256." evidence="4">
    <original>A</original>
    <variation>D</variation>
    <location>
        <position position="253"/>
    </location>
</feature>
<feature type="mutagenesis site" description="No effect on enzymatic activity; slight decrease in cytotoxicity." evidence="4">
    <original>A</original>
    <variation>D</variation>
    <location>
        <position position="253"/>
    </location>
</feature>
<feature type="mutagenesis site" description="No effect on enzymatic activity or cytotoxicity." evidence="4">
    <original>I</original>
    <variation>E</variation>
    <location>
        <position position="254"/>
    </location>
</feature>
<feature type="mutagenesis site" description="No effect on enzymatic activity or cytotoxicity." evidence="4">
    <original>L</original>
    <variation>E</variation>
    <location>
        <position position="255"/>
    </location>
</feature>
<feature type="mutagenesis site" description="225-fold decrease in cytotoxicity, probably due to reduced translocation across the ER membrane; when associated with D-253." evidence="4">
    <original>G</original>
    <variation>E</variation>
    <location>
        <position position="256"/>
    </location>
</feature>
<feature type="mutagenesis site" description="No effect on enzymatic activity; slight decrease in cytotoxicity." evidence="4">
    <original>G</original>
    <variation>E</variation>
    <location>
        <position position="256"/>
    </location>
</feature>
<feature type="mutagenesis site" description="No effect on cytotoxicity." evidence="3">
    <original>W</original>
    <variation>F</variation>
    <variation>G</variation>
    <location>
        <position position="299"/>
    </location>
</feature>
<feature type="mutagenesis site" description="Reduced subunit association and cytotoxicity." evidence="3">
    <original>D</original>
    <variation>K</variation>
    <location>
        <position position="300"/>
    </location>
</feature>
<feature type="mutagenesis site" description="Reduced subunit association and cytotoxicity." evidence="3">
    <original>R</original>
    <variation>E</variation>
    <location>
        <position position="310"/>
    </location>
</feature>
<feature type="mutagenesis site" description="Reduced subunit association and cytotoxicity." evidence="3">
    <original>R</original>
    <variation>E</variation>
    <location>
        <position position="311"/>
    </location>
</feature>
<feature type="sequence conflict" description="In Ref. 2; CAA30741." evidence="5" ref="2">
    <original>A</original>
    <variation>P</variation>
    <location>
        <position position="190"/>
    </location>
</feature>
<feature type="strand" evidence="6">
    <location>
        <begin position="24"/>
        <end position="28"/>
    </location>
</feature>
<feature type="helix" evidence="6">
    <location>
        <begin position="32"/>
        <end position="46"/>
    </location>
</feature>
<feature type="strand" evidence="6">
    <location>
        <begin position="47"/>
        <end position="55"/>
    </location>
</feature>
<feature type="strand" evidence="6">
    <location>
        <begin position="58"/>
        <end position="63"/>
    </location>
</feature>
<feature type="strand" evidence="6">
    <location>
        <begin position="71"/>
        <end position="77"/>
    </location>
</feature>
<feature type="turn" evidence="6">
    <location>
        <begin position="81"/>
        <end position="83"/>
    </location>
</feature>
<feature type="strand" evidence="6">
    <location>
        <begin position="90"/>
        <end position="94"/>
    </location>
</feature>
<feature type="turn" evidence="6">
    <location>
        <begin position="95"/>
        <end position="98"/>
    </location>
</feature>
<feature type="strand" evidence="6">
    <location>
        <begin position="99"/>
        <end position="104"/>
    </location>
</feature>
<feature type="turn" evidence="6">
    <location>
        <begin position="106"/>
        <end position="108"/>
    </location>
</feature>
<feature type="strand" evidence="6">
    <location>
        <begin position="110"/>
        <end position="113"/>
    </location>
</feature>
<feature type="helix" evidence="6">
    <location>
        <begin position="115"/>
        <end position="117"/>
    </location>
</feature>
<feature type="strand" evidence="6">
    <location>
        <begin position="126"/>
        <end position="129"/>
    </location>
</feature>
<feature type="helix" evidence="6">
    <location>
        <begin position="136"/>
        <end position="143"/>
    </location>
</feature>
<feature type="helix" evidence="6">
    <location>
        <begin position="154"/>
        <end position="165"/>
    </location>
</feature>
<feature type="strand" evidence="6">
    <location>
        <begin position="169"/>
        <end position="171"/>
    </location>
</feature>
<feature type="helix" evidence="6">
    <location>
        <begin position="174"/>
        <end position="192"/>
    </location>
</feature>
<feature type="helix" evidence="6">
    <location>
        <begin position="194"/>
        <end position="201"/>
    </location>
</feature>
<feature type="helix" evidence="6">
    <location>
        <begin position="202"/>
        <end position="204"/>
    </location>
</feature>
<feature type="helix" evidence="6">
    <location>
        <begin position="216"/>
        <end position="222"/>
    </location>
</feature>
<feature type="helix" evidence="6">
    <location>
        <begin position="225"/>
        <end position="231"/>
    </location>
</feature>
<feature type="helix" evidence="6">
    <location>
        <begin position="232"/>
        <end position="234"/>
    </location>
</feature>
<feature type="strand" evidence="6">
    <location>
        <begin position="239"/>
        <end position="243"/>
    </location>
</feature>
<feature type="strand" evidence="6">
    <location>
        <begin position="246"/>
        <end position="250"/>
    </location>
</feature>
<feature type="helix" evidence="6">
    <location>
        <begin position="251"/>
        <end position="257"/>
    </location>
</feature>
<feature type="turn" evidence="6">
    <location>
        <begin position="286"/>
        <end position="288"/>
    </location>
</feature>
<feature type="strand" evidence="6">
    <location>
        <begin position="291"/>
        <end position="293"/>
    </location>
</feature>
<feature type="strand" evidence="6">
    <location>
        <begin position="295"/>
        <end position="300"/>
    </location>
</feature>
<feature type="helix" evidence="6">
    <location>
        <begin position="301"/>
        <end position="307"/>
    </location>
</feature>
<keyword id="KW-0002">3D-structure</keyword>
<keyword id="KW-1015">Disulfide bond</keyword>
<keyword id="KW-0378">Hydrolase</keyword>
<keyword id="KW-0652">Protein synthesis inhibitor</keyword>
<keyword id="KW-0732">Signal</keyword>
<keyword id="KW-0800">Toxin</keyword>
<keyword id="KW-0843">Virulence</keyword>
<evidence type="ECO:0000250" key="1"/>
<evidence type="ECO:0000255" key="2"/>
<evidence type="ECO:0000269" key="3">
    <source>
    </source>
</evidence>
<evidence type="ECO:0000269" key="4">
    <source>
    </source>
</evidence>
<evidence type="ECO:0000305" key="5"/>
<evidence type="ECO:0007829" key="6">
    <source>
        <dbReference type="PDB" id="1DM0"/>
    </source>
</evidence>
<comment type="function">
    <text>The A subunit is responsible for inhibiting protein synthesis through the catalytic inactivation of 60S ribosomal subunits. After endocytosis, the A subunit is cleaved by furin in two fragments, A1 and A2: A1 is the catalytically active fragment, and A2 is essential for holotoxin assembly with the B subunits.</text>
</comment>
<comment type="catalytic activity">
    <reaction>
        <text>Endohydrolysis of the N-glycosidic bond at one specific adenosine on the 28S rRNA.</text>
        <dbReference type="EC" id="3.2.2.22"/>
    </reaction>
</comment>
<comment type="subunit">
    <text>Shiga toxin contains a single subunit A and five copies of subunit B.</text>
</comment>
<comment type="similarity">
    <text evidence="5">Belongs to the ribosome-inactivating protein family.</text>
</comment>
<name>STXA_SHIDY</name>
<accession>Q9FBI2</accession>
<dbReference type="EC" id="3.2.2.22"/>
<dbReference type="EMBL" id="X07903">
    <property type="protein sequence ID" value="CAA30741.1"/>
    <property type="molecule type" value="Genomic_DNA"/>
</dbReference>
<dbReference type="EMBL" id="M19437">
    <property type="protein sequence ID" value="AAA98347.1"/>
    <property type="molecule type" value="Genomic_DNA"/>
</dbReference>
<dbReference type="EMBL" id="M24352">
    <property type="protein sequence ID" value="AAA26538.1"/>
    <property type="molecule type" value="Genomic_DNA"/>
</dbReference>
<dbReference type="EMBL" id="AJ271153">
    <property type="protein sequence ID" value="CAC05622.1"/>
    <property type="molecule type" value="Genomic_DNA"/>
</dbReference>
<dbReference type="PDB" id="1DM0">
    <property type="method" value="X-ray"/>
    <property type="resolution" value="2.50 A"/>
    <property type="chains" value="A/L=23-309"/>
</dbReference>
<dbReference type="PDB" id="1R4Q">
    <property type="method" value="X-ray"/>
    <property type="resolution" value="2.50 A"/>
    <property type="chains" value="A/L=23-315"/>
</dbReference>
<dbReference type="PDBsum" id="1DM0"/>
<dbReference type="PDBsum" id="1R4Q"/>
<dbReference type="SMR" id="Q9FBI2"/>
<dbReference type="BindingDB" id="Q9FBI2"/>
<dbReference type="ChEMBL" id="CHEMBL3879822"/>
<dbReference type="DrugCentral" id="Q9FBI2"/>
<dbReference type="UniLectin" id="Q9FBI2"/>
<dbReference type="OMA" id="CNMKIII"/>
<dbReference type="BioCyc" id="MetaCyc:MONOMER-18743"/>
<dbReference type="EvolutionaryTrace" id="Q9FBI2"/>
<dbReference type="GO" id="GO:0030598">
    <property type="term" value="F:rRNA N-glycosylase activity"/>
    <property type="evidence" value="ECO:0007669"/>
    <property type="project" value="UniProtKB-EC"/>
</dbReference>
<dbReference type="GO" id="GO:0090729">
    <property type="term" value="F:toxin activity"/>
    <property type="evidence" value="ECO:0007669"/>
    <property type="project" value="UniProtKB-KW"/>
</dbReference>
<dbReference type="GO" id="GO:0017148">
    <property type="term" value="P:negative regulation of translation"/>
    <property type="evidence" value="ECO:0007669"/>
    <property type="project" value="UniProtKB-KW"/>
</dbReference>
<dbReference type="Gene3D" id="3.40.420.10">
    <property type="entry name" value="Ricin (A subunit), domain 1"/>
    <property type="match status" value="1"/>
</dbReference>
<dbReference type="Gene3D" id="4.10.470.10">
    <property type="entry name" value="Ricin (A Subunit), domain 2"/>
    <property type="match status" value="1"/>
</dbReference>
<dbReference type="InterPro" id="IPR036041">
    <property type="entry name" value="Ribosome-inact_prot_sf"/>
</dbReference>
<dbReference type="InterPro" id="IPR001574">
    <property type="entry name" value="Ribosome_inactivat_prot"/>
</dbReference>
<dbReference type="InterPro" id="IPR017988">
    <property type="entry name" value="Ribosome_inactivat_prot_CS"/>
</dbReference>
<dbReference type="InterPro" id="IPR016138">
    <property type="entry name" value="Ribosome_inactivat_prot_sub1"/>
</dbReference>
<dbReference type="InterPro" id="IPR016139">
    <property type="entry name" value="Ribosome_inactivat_prot_sub2"/>
</dbReference>
<dbReference type="InterPro" id="IPR016331">
    <property type="entry name" value="Shiga-like_toxin_subunit_A"/>
</dbReference>
<dbReference type="NCBIfam" id="NF041694">
    <property type="entry name" value="Shig_StxA_1a"/>
    <property type="match status" value="1"/>
</dbReference>
<dbReference type="NCBIfam" id="NF033658">
    <property type="entry name" value="Shiga_Stx1A"/>
    <property type="match status" value="1"/>
</dbReference>
<dbReference type="PANTHER" id="PTHR33453">
    <property type="match status" value="1"/>
</dbReference>
<dbReference type="PANTHER" id="PTHR33453:SF34">
    <property type="entry name" value="RIBOSOME-INACTIVATING PROTEIN"/>
    <property type="match status" value="1"/>
</dbReference>
<dbReference type="Pfam" id="PF00161">
    <property type="entry name" value="RIP"/>
    <property type="match status" value="1"/>
</dbReference>
<dbReference type="PIRSF" id="PIRSF001924">
    <property type="entry name" value="Shigella_toxin_subunit_A"/>
    <property type="match status" value="1"/>
</dbReference>
<dbReference type="SUPFAM" id="SSF56371">
    <property type="entry name" value="Ribosome inactivating proteins (RIP)"/>
    <property type="match status" value="1"/>
</dbReference>
<dbReference type="PROSITE" id="PS00275">
    <property type="entry name" value="SHIGA_RICIN"/>
    <property type="match status" value="1"/>
</dbReference>
<proteinExistence type="evidence at protein level"/>
<organism>
    <name type="scientific">Shigella dysenteriae</name>
    <dbReference type="NCBI Taxonomy" id="622"/>
    <lineage>
        <taxon>Bacteria</taxon>
        <taxon>Pseudomonadati</taxon>
        <taxon>Pseudomonadota</taxon>
        <taxon>Gammaproteobacteria</taxon>
        <taxon>Enterobacterales</taxon>
        <taxon>Enterobacteriaceae</taxon>
        <taxon>Shigella</taxon>
    </lineage>
</organism>
<sequence>MKIIIFRVLTFFFVIFSVNVVAKEFTLDFSTAKTYVDSLNVIRSAIGTPLQTISSGGTSLLMIDSGTGDNLFAVDVRGIDPEEGRFNNLRLIVERNNLYVTGFVNRTNNVFYRFADFSHVTFPGTTAVTLSGDSSYTTLQRVAGISRTGMQINRHSLTTSYLDLMSHSGTSLTQSVARAMLRFVTVTAEALRFRQIQRGFRTTLDDLSGRSYVMTAEDVDLTLNWGRLSSVLPDYHGQDSVRVGRISFGSINAILGSVALILNCHHHASRVARMASDEFPSMCPADGRVRGITHNKILWDSSTLGAILMRRTISS</sequence>